<evidence type="ECO:0000250" key="1"/>
<evidence type="ECO:0000250" key="2">
    <source>
        <dbReference type="UniProtKB" id="P01501"/>
    </source>
</evidence>
<evidence type="ECO:0000303" key="3">
    <source>
    </source>
</evidence>
<evidence type="ECO:0000305" key="4"/>
<evidence type="ECO:0000305" key="5">
    <source>
    </source>
</evidence>
<protein>
    <recommendedName>
        <fullName evidence="3">Melittin</fullName>
        <shortName>MEL</shortName>
        <shortName>MLT</shortName>
    </recommendedName>
</protein>
<dbReference type="EMBL" id="AF487910">
    <property type="protein sequence ID" value="AAO12204.1"/>
    <property type="molecule type" value="mRNA"/>
</dbReference>
<dbReference type="BMRB" id="P68408"/>
<dbReference type="SMR" id="P68408"/>
<dbReference type="GO" id="GO:0005576">
    <property type="term" value="C:extracellular region"/>
    <property type="evidence" value="ECO:0007669"/>
    <property type="project" value="UniProtKB-SubCell"/>
</dbReference>
<dbReference type="GO" id="GO:0044218">
    <property type="term" value="C:other organism cell membrane"/>
    <property type="evidence" value="ECO:0007669"/>
    <property type="project" value="UniProtKB-KW"/>
</dbReference>
<dbReference type="GO" id="GO:0046930">
    <property type="term" value="C:pore complex"/>
    <property type="evidence" value="ECO:0007669"/>
    <property type="project" value="UniProtKB-KW"/>
</dbReference>
<dbReference type="GO" id="GO:0015288">
    <property type="term" value="F:porin activity"/>
    <property type="evidence" value="ECO:0007669"/>
    <property type="project" value="UniProtKB-KW"/>
</dbReference>
<dbReference type="GO" id="GO:0004860">
    <property type="term" value="F:protein kinase inhibitor activity"/>
    <property type="evidence" value="ECO:0007669"/>
    <property type="project" value="InterPro"/>
</dbReference>
<dbReference type="GO" id="GO:0090729">
    <property type="term" value="F:toxin activity"/>
    <property type="evidence" value="ECO:0007669"/>
    <property type="project" value="UniProtKB-KW"/>
</dbReference>
<dbReference type="GO" id="GO:0031640">
    <property type="term" value="P:killing of cells of another organism"/>
    <property type="evidence" value="ECO:0007669"/>
    <property type="project" value="UniProtKB-KW"/>
</dbReference>
<dbReference type="GO" id="GO:0006811">
    <property type="term" value="P:monoatomic ion transport"/>
    <property type="evidence" value="ECO:0007669"/>
    <property type="project" value="UniProtKB-KW"/>
</dbReference>
<dbReference type="InterPro" id="IPR002116">
    <property type="entry name" value="Melittin/Api_allergen"/>
</dbReference>
<dbReference type="Pfam" id="PF01372">
    <property type="entry name" value="Melittin"/>
    <property type="match status" value="1"/>
</dbReference>
<keyword id="KW-0020">Allergen</keyword>
<keyword id="KW-0027">Amidation</keyword>
<keyword id="KW-0929">Antimicrobial</keyword>
<keyword id="KW-0204">Cytolysis</keyword>
<keyword id="KW-0291">Formylation</keyword>
<keyword id="KW-0354">Hemolysis</keyword>
<keyword id="KW-0406">Ion transport</keyword>
<keyword id="KW-0472">Membrane</keyword>
<keyword id="KW-0626">Porin</keyword>
<keyword id="KW-0964">Secreted</keyword>
<keyword id="KW-0732">Signal</keyword>
<keyword id="KW-1052">Target cell membrane</keyword>
<keyword id="KW-1053">Target membrane</keyword>
<keyword id="KW-0800">Toxin</keyword>
<keyword id="KW-0812">Transmembrane</keyword>
<keyword id="KW-0813">Transport</keyword>
<organism>
    <name type="scientific">Vespa magnifica</name>
    <name type="common">Hornet</name>
    <dbReference type="NCBI Taxonomy" id="202807"/>
    <lineage>
        <taxon>Eukaryota</taxon>
        <taxon>Metazoa</taxon>
        <taxon>Ecdysozoa</taxon>
        <taxon>Arthropoda</taxon>
        <taxon>Hexapoda</taxon>
        <taxon>Insecta</taxon>
        <taxon>Pterygota</taxon>
        <taxon>Neoptera</taxon>
        <taxon>Endopterygota</taxon>
        <taxon>Hymenoptera</taxon>
        <taxon>Apocrita</taxon>
        <taxon>Aculeata</taxon>
        <taxon>Vespoidea</taxon>
        <taxon>Vespidae</taxon>
        <taxon>Vespinae</taxon>
        <taxon>Vespa</taxon>
    </lineage>
</organism>
<sequence length="70" mass="7543">MKFLVNVALVFMVVYISFIYAAPEPEPAPEAEAEADAEADPEAGIGAVLKVLTTGLPALISWIKRKRQQG</sequence>
<accession>P68408</accession>
<accession>P59260</accession>
<name>MEL_VESMG</name>
<gene>
    <name type="primary">MELT</name>
</gene>
<proteinExistence type="inferred from homology"/>
<feature type="signal peptide" evidence="1">
    <location>
        <begin position="1"/>
        <end position="21"/>
    </location>
</feature>
<feature type="propeptide" id="PRO_0000035154" description="Removed by a dipeptidylpeptidase" evidence="1">
    <location>
        <begin position="22"/>
        <end position="43"/>
    </location>
</feature>
<feature type="peptide" id="PRO_0000035155" description="Melittin" evidence="2">
    <location>
        <begin position="44"/>
        <end position="69"/>
    </location>
</feature>
<feature type="site" description="Important for the flexibility at the center of the helix, flexibility that is important for the stability of the voltage-gated pore" evidence="2">
    <location>
        <position position="57"/>
    </location>
</feature>
<feature type="modified residue" description="N-formylglycine; partial" evidence="2">
    <location>
        <position position="44"/>
    </location>
</feature>
<feature type="modified residue" description="Glutamine amide" evidence="2">
    <location>
        <position position="69"/>
    </location>
</feature>
<comment type="function">
    <text evidence="2">Main toxin of bee venom with strong hemolytic activity and antimicrobial activity. It has enhancing effects on bee venom phospholipase A2 activity. This amphipathic toxin binds to negatively charged membrane surface and forms pore by inserting into lipid bilayers inducing the leakage of ions and molecules and the enhancement of permeability that ultimately leads to cell lysis. It acts as a voltage-gated pore with higher selectivity for anions over cations. The ion conductance has been shown to be voltage-dependent. Self-association of melittin in membranes is promoted by high ionic strength, but not by the presence of negatively charged lipids. In vivo, intradermal injection into healthy human volunteers produce sharp pain sensation and an inflammatory response. It produces pain by activating primary nociceptor cells directly and indirectly due to its ability to activate plasma membrane phospholipase A2 and its pore-forming activity.</text>
</comment>
<comment type="subunit">
    <text evidence="2">Monomer (in solution and for integration into membranes), homotetramer (in solution and potentially as a toroidal pore in membranes), and potenially homomultimer (as a toroidal pore in membranes).</text>
</comment>
<comment type="subcellular location">
    <subcellularLocation>
        <location evidence="5">Secreted</location>
    </subcellularLocation>
    <subcellularLocation>
        <location evidence="2">Target cell membrane</location>
    </subcellularLocation>
    <text evidence="2">Alpha-helical peptides form toroidal pores in the prey.</text>
</comment>
<comment type="tissue specificity">
    <text evidence="5">Expressed by the venom gland.</text>
</comment>
<comment type="allergen">
    <text evidence="2">Causes an allergic reaction in human.</text>
</comment>
<comment type="similarity">
    <text evidence="4">Belongs to the melittin family.</text>
</comment>
<reference key="1">
    <citation type="journal article" date="2003" name="Yi Chuan Xue Bao">
        <title>Cloning and comparative analysis of the venom prepromelittin genes from four wasp species.</title>
        <authorList>
            <person name="Shi W.J."/>
            <person name="Zhang S.F."/>
            <person name="Zhang C.-X."/>
            <person name="Cheng J.A."/>
        </authorList>
    </citation>
    <scope>NUCLEOTIDE SEQUENCE [MRNA]</scope>
    <source>
        <tissue>Venom gland</tissue>
    </source>
</reference>